<feature type="chain" id="PRO_0000079109" description="Nucleoprotein">
    <location>
        <begin position="1"/>
        <end position="498"/>
    </location>
</feature>
<feature type="region of interest" description="Disordered" evidence="2">
    <location>
        <begin position="1"/>
        <end position="21"/>
    </location>
</feature>
<feature type="short sequence motif" description="Unconventional nuclear localization signal" evidence="1">
    <location>
        <begin position="1"/>
        <end position="18"/>
    </location>
</feature>
<feature type="short sequence motif" description="Bipartite nuclear localization signal" evidence="1">
    <location>
        <begin position="198"/>
        <end position="216"/>
    </location>
</feature>
<feature type="compositionally biased region" description="Basic and acidic residues" evidence="2">
    <location>
        <begin position="8"/>
        <end position="21"/>
    </location>
</feature>
<feature type="sequence conflict" description="In Ref. 2; ABD95354." ref="2">
    <original>E</original>
    <variation>N</variation>
    <location>
        <position position="290"/>
    </location>
</feature>
<gene>
    <name evidence="1" type="primary">NP</name>
</gene>
<sequence>MASQGTKRSYEQMETDGERQNATEIRASVGKMIDGIGRFYIQMCTELKLSDYEGRLIQNSLTIERMVLSAFDERRNKYLEEHPSAGKDPKKTGGPIYKRVDGKWMRELVLYDKEEIRRIWRQANNGDDATAGLTHMMIWHSNLNDTTYQRTRALVRTGMDPRMCSLMQGSTLPRRSGAAGAAVKGVGTMVLELIRMIKRGINDRNFWRGENGRKTRIAYERMCNILKGKFQTAAQRAMMDQVRESRNPGNAEIEDLIFLARSALILRGSVAHKSCLPACVYGPAVASGYEFEKEGYSLVGIDPFKLLQTSQVYSLIRPNENPAHKSQLVWMACNSAAFEDLRVSSFIRGTKVIPRGKLSTRGVQIASNENMDTMGSSTLELRSRYWAIRTRSGGNTNQQRASAGQISIQPTFSVQRNLPFDKTTIMAAFTGNAEGRTSDMRAEIIKMMESARPEEVSFQGRGVFELSDERAANPIVPSFDMSNEGSYFFGDNAEEYDN</sequence>
<accession>P18073</accession>
<accession>Q1K9I2</accession>
<accession>Q1WP05</accession>
<name>NCAP_I77AB</name>
<proteinExistence type="inferred from homology"/>
<organism>
    <name type="scientific">Influenza A virus (strain A/USSR/90/1977 H1N1)</name>
    <dbReference type="NCBI Taxonomy" id="381516"/>
    <lineage>
        <taxon>Viruses</taxon>
        <taxon>Riboviria</taxon>
        <taxon>Orthornavirae</taxon>
        <taxon>Negarnaviricota</taxon>
        <taxon>Polyploviricotina</taxon>
        <taxon>Insthoviricetes</taxon>
        <taxon>Articulavirales</taxon>
        <taxon>Orthomyxoviridae</taxon>
        <taxon>Alphainfluenzavirus</taxon>
        <taxon>Alphainfluenzavirus influenzae</taxon>
        <taxon>Influenza A virus</taxon>
    </lineage>
</organism>
<protein>
    <recommendedName>
        <fullName evidence="1">Nucleoprotein</fullName>
    </recommendedName>
    <alternativeName>
        <fullName evidence="1">Nucleocapsid protein</fullName>
        <shortName evidence="1">Protein N</shortName>
    </alternativeName>
</protein>
<keyword id="KW-0167">Capsid protein</keyword>
<keyword id="KW-1139">Helical capsid protein</keyword>
<keyword id="KW-1048">Host nucleus</keyword>
<keyword id="KW-0945">Host-virus interaction</keyword>
<keyword id="KW-0687">Ribonucleoprotein</keyword>
<keyword id="KW-0694">RNA-binding</keyword>
<keyword id="KW-0543">Viral nucleoprotein</keyword>
<keyword id="KW-1163">Viral penetration into host nucleus</keyword>
<keyword id="KW-0946">Virion</keyword>
<keyword id="KW-1160">Virus entry into host cell</keyword>
<reference key="1">
    <citation type="journal article" date="1989" name="J. Gen. Virol.">
        <title>Biological and genetic evolution of the nucleoprotein gene of human influenza A viruses.</title>
        <authorList>
            <person name="Altmueller A."/>
            <person name="Fitch W.M."/>
            <person name="Scholtissek C."/>
        </authorList>
    </citation>
    <scope>NUCLEOTIDE SEQUENCE [GENOMIC RNA]</scope>
</reference>
<reference key="2">
    <citation type="submission" date="2006-03" db="EMBL/GenBank/DDBJ databases">
        <title>The NIAID influenza genome sequencing project.</title>
        <authorList>
            <person name="Ghedin E."/>
            <person name="Spiro D."/>
            <person name="Miller N."/>
            <person name="Zaborsky J."/>
            <person name="Feldblyum T."/>
            <person name="Subbu V."/>
            <person name="Shumway M."/>
            <person name="Sparenborg J."/>
            <person name="Groveman L."/>
            <person name="Halpin R."/>
            <person name="Sitz J."/>
            <person name="Koo H."/>
            <person name="Salzberg S.L."/>
            <person name="Webster R.G."/>
            <person name="Hoffmann E."/>
            <person name="Krauss S."/>
            <person name="Naeve C."/>
            <person name="Bao Y."/>
            <person name="Bolotov P."/>
            <person name="Dernovoy D."/>
            <person name="Kiryutin B."/>
            <person name="Lipman D.J."/>
            <person name="Tatusova T."/>
        </authorList>
    </citation>
    <scope>NUCLEOTIDE SEQUENCE [GENOMIC RNA]</scope>
</reference>
<reference key="3">
    <citation type="submission" date="2006-04" db="EMBL/GenBank/DDBJ databases">
        <title>Complete genome sequencing and analysis of selected Influenza Virus vaccine strains spanning six decades (1933-1999).</title>
        <authorList>
            <person name="Mbawuike I.N."/>
            <person name="Zhang Y."/>
            <person name="Yamada R.E."/>
            <person name="Nino D."/>
            <person name="Bui H.-H."/>
            <person name="Sette A."/>
            <person name="Couch R.B."/>
        </authorList>
    </citation>
    <scope>NUCLEOTIDE SEQUENCE [GENOMIC RNA]</scope>
</reference>
<organismHost>
    <name type="scientific">Aves</name>
    <dbReference type="NCBI Taxonomy" id="8782"/>
</organismHost>
<organismHost>
    <name type="scientific">Homo sapiens</name>
    <name type="common">Human</name>
    <dbReference type="NCBI Taxonomy" id="9606"/>
</organismHost>
<organismHost>
    <name type="scientific">Sus scrofa</name>
    <name type="common">Pig</name>
    <dbReference type="NCBI Taxonomy" id="9823"/>
</organismHost>
<dbReference type="EMBL" id="D00603">
    <property type="protein sequence ID" value="BAA00479.1"/>
    <property type="molecule type" value="Genomic_RNA"/>
</dbReference>
<dbReference type="EMBL" id="CY010375">
    <property type="protein sequence ID" value="ABD95354.1"/>
    <property type="molecule type" value="Genomic_RNA"/>
</dbReference>
<dbReference type="EMBL" id="DQ508898">
    <property type="protein sequence ID" value="ABF21291.1"/>
    <property type="molecule type" value="Genomic_RNA"/>
</dbReference>
<dbReference type="PIR" id="D36754">
    <property type="entry name" value="VHIVX3"/>
</dbReference>
<dbReference type="SMR" id="P18073"/>
<dbReference type="PRO" id="PR:P18073"/>
<dbReference type="Proteomes" id="UP000007793">
    <property type="component" value="Genome"/>
</dbReference>
<dbReference type="Proteomes" id="UP000121508">
    <property type="component" value="Genome"/>
</dbReference>
<dbReference type="GO" id="GO:0019029">
    <property type="term" value="C:helical viral capsid"/>
    <property type="evidence" value="ECO:0007669"/>
    <property type="project" value="UniProtKB-UniRule"/>
</dbReference>
<dbReference type="GO" id="GO:0043657">
    <property type="term" value="C:host cell"/>
    <property type="evidence" value="ECO:0007669"/>
    <property type="project" value="GOC"/>
</dbReference>
<dbReference type="GO" id="GO:0042025">
    <property type="term" value="C:host cell nucleus"/>
    <property type="evidence" value="ECO:0007669"/>
    <property type="project" value="UniProtKB-SubCell"/>
</dbReference>
<dbReference type="GO" id="GO:1990904">
    <property type="term" value="C:ribonucleoprotein complex"/>
    <property type="evidence" value="ECO:0007669"/>
    <property type="project" value="UniProtKB-KW"/>
</dbReference>
<dbReference type="GO" id="GO:0019013">
    <property type="term" value="C:viral nucleocapsid"/>
    <property type="evidence" value="ECO:0007669"/>
    <property type="project" value="UniProtKB-UniRule"/>
</dbReference>
<dbReference type="GO" id="GO:0003723">
    <property type="term" value="F:RNA binding"/>
    <property type="evidence" value="ECO:0007669"/>
    <property type="project" value="UniProtKB-UniRule"/>
</dbReference>
<dbReference type="GO" id="GO:0005198">
    <property type="term" value="F:structural molecule activity"/>
    <property type="evidence" value="ECO:0007669"/>
    <property type="project" value="UniProtKB-UniRule"/>
</dbReference>
<dbReference type="GO" id="GO:0046718">
    <property type="term" value="P:symbiont entry into host cell"/>
    <property type="evidence" value="ECO:0007669"/>
    <property type="project" value="UniProtKB-KW"/>
</dbReference>
<dbReference type="GO" id="GO:0075732">
    <property type="term" value="P:viral penetration into host nucleus"/>
    <property type="evidence" value="ECO:0007669"/>
    <property type="project" value="UniProtKB-UniRule"/>
</dbReference>
<dbReference type="HAMAP" id="MF_04070">
    <property type="entry name" value="INFV_NCAP"/>
    <property type="match status" value="1"/>
</dbReference>
<dbReference type="InterPro" id="IPR002141">
    <property type="entry name" value="Flu_NP"/>
</dbReference>
<dbReference type="Pfam" id="PF00506">
    <property type="entry name" value="Flu_NP"/>
    <property type="match status" value="1"/>
</dbReference>
<dbReference type="SUPFAM" id="SSF161003">
    <property type="entry name" value="flu NP-like"/>
    <property type="match status" value="1"/>
</dbReference>
<evidence type="ECO:0000255" key="1">
    <source>
        <dbReference type="HAMAP-Rule" id="MF_04070"/>
    </source>
</evidence>
<evidence type="ECO:0000256" key="2">
    <source>
        <dbReference type="SAM" id="MobiDB-lite"/>
    </source>
</evidence>
<comment type="function">
    <text evidence="1">Encapsidates the negative strand viral RNA, protecting it from nucleases. The encapsidated genomic RNA is termed the ribonucleoprotein (RNP) and serves as template for transcription and replication. The RNP needs to be localized in the host nucleus to start an infectious cycle, but is too large to diffuse through the nuclear pore complex. NP comprises at least 2 nuclear localization signals that are responsible for the active RNP import into the nucleus through cellular importin alpha/beta pathway. Later in the infection, nclear export of RNPs are mediated through viral proteins NEP interacting with M1 which binds nucleoproteins. It is possible that nucleoprotein binds directly host exportin-1/XPO1 and plays an active role in RNPs nuclear export. M1 interaction with RNP seems to hide nucleoprotein's nuclear localization signals. Soon after a virion infects a new cell, M1 dissociates from the RNP under acidification of the virion driven by M2 protein. Dissociation of M1 from RNP unmasks nucleoprotein's nuclear localization signals, targeting the RNP to the nucleus.</text>
</comment>
<comment type="subunit">
    <text evidence="1">Homomultimerizes to form the nucleocapsid. May bind host exportin-1/XPO1. Binds to viral genomic RNA. Protein-RNA contacts are mediated by a combination of electrostatic interactions between positively charged residues and the phosphate backbone and planar interactions between aromatic side chains and bases.</text>
</comment>
<comment type="subcellular location">
    <subcellularLocation>
        <location evidence="1">Virion</location>
    </subcellularLocation>
    <subcellularLocation>
        <location evidence="1">Host nucleus</location>
    </subcellularLocation>
</comment>
<comment type="PTM">
    <text evidence="1">Late in virus-infected cells, may be cleaved from a 56-kDa protein to a 53-kDa protein by a cellular caspase. This cleavage might be a marker for the onset of apoptosis in infected cells or have a specific function in virus host interaction.</text>
</comment>
<comment type="similarity">
    <text evidence="1">Belongs to the influenza viruses nucleoprotein family.</text>
</comment>